<accession>Q1A3R3</accession>
<dbReference type="EMBL" id="DQ345351">
    <property type="protein sequence ID" value="ABC70187.1"/>
    <property type="molecule type" value="mRNA"/>
</dbReference>
<dbReference type="ConoServer" id="1138">
    <property type="toxin name" value="Lt5a precursor"/>
</dbReference>
<dbReference type="GO" id="GO:0005576">
    <property type="term" value="C:extracellular region"/>
    <property type="evidence" value="ECO:0007669"/>
    <property type="project" value="UniProtKB-SubCell"/>
</dbReference>
<dbReference type="GO" id="GO:0090729">
    <property type="term" value="F:toxin activity"/>
    <property type="evidence" value="ECO:0007669"/>
    <property type="project" value="UniProtKB-KW"/>
</dbReference>
<dbReference type="InterPro" id="IPR031565">
    <property type="entry name" value="T-conotoxin"/>
</dbReference>
<dbReference type="Pfam" id="PF16981">
    <property type="entry name" value="Chi-conotoxin"/>
    <property type="match status" value="1"/>
</dbReference>
<evidence type="ECO:0000250" key="1"/>
<evidence type="ECO:0000255" key="2"/>
<evidence type="ECO:0000303" key="3">
    <source>
    </source>
</evidence>
<evidence type="ECO:0000305" key="4"/>
<evidence type="ECO:0000305" key="5">
    <source>
    </source>
</evidence>
<evidence type="ECO:0000312" key="6">
    <source>
        <dbReference type="EMBL" id="ABC70187.1"/>
    </source>
</evidence>
<sequence length="65" mass="7518">MRCLPVFIILLLLIPSAPSVDAQRKTKDDVPLASFHDNAKRTLKRLWNKRSCCPQEFLCCLYLVK</sequence>
<feature type="signal peptide" evidence="2">
    <location>
        <begin position="1"/>
        <end position="19"/>
    </location>
</feature>
<feature type="propeptide" id="PRO_0000315423" evidence="1">
    <location>
        <begin position="20"/>
        <end position="48"/>
    </location>
</feature>
<feature type="peptide" id="PRO_0000315424" description="Conotoxin Lt5.1">
    <location>
        <begin position="51"/>
        <end position="65"/>
    </location>
</feature>
<organism>
    <name type="scientific">Conus litteratus</name>
    <name type="common">Lettered cone</name>
    <dbReference type="NCBI Taxonomy" id="89445"/>
    <lineage>
        <taxon>Eukaryota</taxon>
        <taxon>Metazoa</taxon>
        <taxon>Spiralia</taxon>
        <taxon>Lophotrochozoa</taxon>
        <taxon>Mollusca</taxon>
        <taxon>Gastropoda</taxon>
        <taxon>Caenogastropoda</taxon>
        <taxon>Neogastropoda</taxon>
        <taxon>Conoidea</taxon>
        <taxon>Conidae</taxon>
        <taxon>Conus</taxon>
        <taxon>Elisaconus</taxon>
    </lineage>
</organism>
<keyword id="KW-0165">Cleavage on pair of basic residues</keyword>
<keyword id="KW-1015">Disulfide bond</keyword>
<keyword id="KW-0964">Secreted</keyword>
<keyword id="KW-0732">Signal</keyword>
<keyword id="KW-0800">Toxin</keyword>
<protein>
    <recommendedName>
        <fullName evidence="3">Conotoxin Lt5.1</fullName>
    </recommendedName>
    <alternativeName>
        <fullName evidence="6">Lt5a</fullName>
    </alternativeName>
</protein>
<name>CT51_CONLT</name>
<reference key="1">
    <citation type="journal article" date="2006" name="Genomics">
        <title>Diversity and evolution of conotoxins based on gene expression profiling of Conus litteratus.</title>
        <authorList>
            <person name="Pi C."/>
            <person name="Liu J."/>
            <person name="Peng C."/>
            <person name="Liu Y."/>
            <person name="Jiang X."/>
            <person name="Zhao Y."/>
            <person name="Tang S."/>
            <person name="Wang L."/>
            <person name="Dong M."/>
            <person name="Chen S."/>
            <person name="Xu A."/>
        </authorList>
    </citation>
    <scope>NUCLEOTIDE SEQUENCE [MRNA]</scope>
    <source>
        <tissue>Venom duct</tissue>
    </source>
</reference>
<proteinExistence type="inferred from homology"/>
<comment type="subcellular location">
    <subcellularLocation>
        <location evidence="5">Secreted</location>
    </subcellularLocation>
</comment>
<comment type="tissue specificity">
    <text evidence="5">Expressed by the venom duct.</text>
</comment>
<comment type="domain">
    <text evidence="4">The cysteine framework is V (CC-CC).</text>
</comment>
<comment type="PTM">
    <text evidence="4">Contains 2 disulfide bonds that can be either 'C1-C3, C2-C4' or 'C1-C4, C2-C3', since these disulfide connectivities have been observed for conotoxins with cysteine framework V (for examples, see AC P0DQQ7 and AC P81755).</text>
</comment>
<comment type="similarity">
    <text evidence="4">Belongs to the conotoxin T superfamily.</text>
</comment>